<dbReference type="EMBL" id="AB128049">
    <property type="protein sequence ID" value="BAD69727.1"/>
    <property type="molecule type" value="Genomic_DNA"/>
</dbReference>
<dbReference type="RefSeq" id="NP_001040610.1">
    <property type="nucleotide sequence ID" value="NM_001047145.1"/>
</dbReference>
<dbReference type="SMR" id="Q5TM18"/>
<dbReference type="FunCoup" id="Q5TM18">
    <property type="interactions" value="905"/>
</dbReference>
<dbReference type="STRING" id="9544.ENSMMUP00000071954"/>
<dbReference type="Ensembl" id="ENSMMUT00000092688.1">
    <property type="protein sequence ID" value="ENSMMUP00000071954.1"/>
    <property type="gene ID" value="ENSMMUG00000052422.1"/>
</dbReference>
<dbReference type="GeneID" id="715331"/>
<dbReference type="KEGG" id="mcc:715331"/>
<dbReference type="CTD" id="534"/>
<dbReference type="VEuPathDB" id="HostDB:ENSMMUG00000052422"/>
<dbReference type="VGNC" id="VGNC:112140">
    <property type="gene designation" value="ATP6V1G2"/>
</dbReference>
<dbReference type="GeneTree" id="ENSGT00940000161280"/>
<dbReference type="HOGENOM" id="CLU_125101_1_1_1"/>
<dbReference type="InParanoid" id="Q5TM18"/>
<dbReference type="OMA" id="EHMGSKD"/>
<dbReference type="OrthoDB" id="250802at2759"/>
<dbReference type="Proteomes" id="UP000006718">
    <property type="component" value="Chromosome 4"/>
</dbReference>
<dbReference type="Bgee" id="ENSMMUG00000052422">
    <property type="expression patterns" value="Expressed in superior frontal gyrus and 13 other cell types or tissues"/>
</dbReference>
<dbReference type="ExpressionAtlas" id="Q5TM18">
    <property type="expression patterns" value="baseline"/>
</dbReference>
<dbReference type="GO" id="GO:0030665">
    <property type="term" value="C:clathrin-coated vesicle membrane"/>
    <property type="evidence" value="ECO:0007669"/>
    <property type="project" value="UniProtKB-SubCell"/>
</dbReference>
<dbReference type="GO" id="GO:0042470">
    <property type="term" value="C:melanosome"/>
    <property type="evidence" value="ECO:0007669"/>
    <property type="project" value="UniProtKB-SubCell"/>
</dbReference>
<dbReference type="GO" id="GO:0030672">
    <property type="term" value="C:synaptic vesicle membrane"/>
    <property type="evidence" value="ECO:0000318"/>
    <property type="project" value="GO_Central"/>
</dbReference>
<dbReference type="GO" id="GO:0000221">
    <property type="term" value="C:vacuolar proton-transporting V-type ATPase, V1 domain"/>
    <property type="evidence" value="ECO:0000250"/>
    <property type="project" value="UniProtKB"/>
</dbReference>
<dbReference type="GO" id="GO:0016887">
    <property type="term" value="F:ATP hydrolysis activity"/>
    <property type="evidence" value="ECO:0000318"/>
    <property type="project" value="GO_Central"/>
</dbReference>
<dbReference type="GO" id="GO:0046961">
    <property type="term" value="F:proton-transporting ATPase activity, rotational mechanism"/>
    <property type="evidence" value="ECO:0000318"/>
    <property type="project" value="GO_Central"/>
</dbReference>
<dbReference type="GO" id="GO:0097401">
    <property type="term" value="P:synaptic vesicle lumen acidification"/>
    <property type="evidence" value="ECO:0000318"/>
    <property type="project" value="GO_Central"/>
</dbReference>
<dbReference type="FunFam" id="1.20.5.2950:FF:000001">
    <property type="entry name" value="V-type proton ATPase subunit G"/>
    <property type="match status" value="1"/>
</dbReference>
<dbReference type="Gene3D" id="1.20.5.2950">
    <property type="match status" value="1"/>
</dbReference>
<dbReference type="InterPro" id="IPR005124">
    <property type="entry name" value="V-ATPase_G"/>
</dbReference>
<dbReference type="NCBIfam" id="TIGR01147">
    <property type="entry name" value="V_ATP_synt_G"/>
    <property type="match status" value="1"/>
</dbReference>
<dbReference type="PANTHER" id="PTHR12713:SF13">
    <property type="entry name" value="V-TYPE PROTON ATPASE SUBUNIT G 2"/>
    <property type="match status" value="1"/>
</dbReference>
<dbReference type="PANTHER" id="PTHR12713">
    <property type="entry name" value="VACUOLAR ATP SYNTHASE SUBUNIT G"/>
    <property type="match status" value="1"/>
</dbReference>
<dbReference type="Pfam" id="PF03179">
    <property type="entry name" value="V-ATPase_G"/>
    <property type="match status" value="1"/>
</dbReference>
<reference key="1">
    <citation type="journal article" date="2004" name="Mol. Biol. Evol.">
        <title>Rhesus macaque class I duplicon structures, organization, and evolution within the alpha block of the major histocompatibility complex.</title>
        <authorList>
            <person name="Kulski J.K."/>
            <person name="Anzai T."/>
            <person name="Shiina T."/>
            <person name="Inoko H."/>
        </authorList>
    </citation>
    <scope>NUCLEOTIDE SEQUENCE [LARGE SCALE GENOMIC DNA]</scope>
</reference>
<proteinExistence type="inferred from homology"/>
<protein>
    <recommendedName>
        <fullName>V-type proton ATPase subunit G 2</fullName>
        <shortName>V-ATPase subunit G 2</shortName>
    </recommendedName>
    <alternativeName>
        <fullName>Vacuolar proton pump subunit G 2</fullName>
    </alternativeName>
</protein>
<sequence length="118" mass="13595">MASQSQGIQQLLQAEKRAAEKVADARKRKARRLKQAKEEAQMEVEQYRREREQEFQSKQQAAMGSQGNLSAEVEQATRRQVQGMQSSQQRNRERVLAQLLGMVCDVRPQVHPNYRISA</sequence>
<feature type="chain" id="PRO_0000192901" description="V-type proton ATPase subunit G 2">
    <location>
        <begin position="1"/>
        <end position="118"/>
    </location>
</feature>
<feature type="region of interest" description="Disordered" evidence="4">
    <location>
        <begin position="23"/>
        <end position="90"/>
    </location>
</feature>
<feature type="compositionally biased region" description="Basic and acidic residues" evidence="4">
    <location>
        <begin position="35"/>
        <end position="55"/>
    </location>
</feature>
<feature type="compositionally biased region" description="Polar residues" evidence="4">
    <location>
        <begin position="56"/>
        <end position="69"/>
    </location>
</feature>
<feature type="compositionally biased region" description="Polar residues" evidence="4">
    <location>
        <begin position="78"/>
        <end position="89"/>
    </location>
</feature>
<evidence type="ECO:0000250" key="1">
    <source>
        <dbReference type="UniProtKB" id="O75348"/>
    </source>
</evidence>
<evidence type="ECO:0000250" key="2">
    <source>
        <dbReference type="UniProtKB" id="O95670"/>
    </source>
</evidence>
<evidence type="ECO:0000250" key="3">
    <source>
        <dbReference type="UniProtKB" id="Q0VCV6"/>
    </source>
</evidence>
<evidence type="ECO:0000256" key="4">
    <source>
        <dbReference type="SAM" id="MobiDB-lite"/>
    </source>
</evidence>
<evidence type="ECO:0000305" key="5"/>
<gene>
    <name type="primary">ATP6V1G2</name>
</gene>
<comment type="function">
    <text evidence="1">Subunit of the V1 complex of vacuolar(H+)-ATPase (V-ATPase), a multisubunit enzyme composed of a peripheral complex (V1) that hydrolyzes ATP and a membrane integral complex (V0) that translocates protons. V-ATPase is responsible for acidifying and maintaining the pH of intracellular compartments and in some cell types, is targeted to the plasma membrane, where it is responsible for acidifying the extracellular environment.</text>
</comment>
<comment type="subunit">
    <text evidence="1">V-ATPase is a heteromultimeric enzyme made up of two complexes: the ATP-hydrolytic V1 complex and the proton translocation V0 complex. The V1 complex consists of three catalytic AB heterodimers that form a heterohexamer, three peripheral stalks each consisting of EG heterodimers, one central rotor including subunits D and F, and the regulatory subunits C and H. The proton translocation complex V0 consists of the proton transport subunit a, a ring of proteolipid subunits c9c'', rotary subunit d, subunits e and f, and the accessory subunits ATP6AP1/Ac45 and ATP6AP2/PRR.</text>
</comment>
<comment type="subcellular location">
    <subcellularLocation>
        <location evidence="2">Melanosome</location>
    </subcellularLocation>
    <subcellularLocation>
        <location evidence="3">Cytoplasmic vesicle</location>
        <location evidence="3">Clathrin-coated vesicle membrane</location>
        <topology evidence="5">Peripheral membrane protein</topology>
    </subcellularLocation>
    <text evidence="2">Highly enriched in late-stage melanosomes.</text>
</comment>
<comment type="similarity">
    <text evidence="5">Belongs to the V-ATPase G subunit family.</text>
</comment>
<keyword id="KW-0968">Cytoplasmic vesicle</keyword>
<keyword id="KW-0375">Hydrogen ion transport</keyword>
<keyword id="KW-0406">Ion transport</keyword>
<keyword id="KW-0472">Membrane</keyword>
<keyword id="KW-1185">Reference proteome</keyword>
<keyword id="KW-0813">Transport</keyword>
<organism>
    <name type="scientific">Macaca mulatta</name>
    <name type="common">Rhesus macaque</name>
    <dbReference type="NCBI Taxonomy" id="9544"/>
    <lineage>
        <taxon>Eukaryota</taxon>
        <taxon>Metazoa</taxon>
        <taxon>Chordata</taxon>
        <taxon>Craniata</taxon>
        <taxon>Vertebrata</taxon>
        <taxon>Euteleostomi</taxon>
        <taxon>Mammalia</taxon>
        <taxon>Eutheria</taxon>
        <taxon>Euarchontoglires</taxon>
        <taxon>Primates</taxon>
        <taxon>Haplorrhini</taxon>
        <taxon>Catarrhini</taxon>
        <taxon>Cercopithecidae</taxon>
        <taxon>Cercopithecinae</taxon>
        <taxon>Macaca</taxon>
    </lineage>
</organism>
<name>VATG2_MACMU</name>
<accession>Q5TM18</accession>